<comment type="function">
    <text>May be a cytokine that affects the growth, movement, or activation state of cells that participate in immune and inflammatory response.</text>
</comment>
<comment type="subcellular location">
    <subcellularLocation>
        <location>Secreted</location>
    </subcellularLocation>
</comment>
<comment type="induction">
    <text>By interferon gamma.</text>
</comment>
<comment type="similarity">
    <text evidence="4">Belongs to the intercrine alpha (chemokine CxC) family.</text>
</comment>
<evidence type="ECO:0000250" key="1"/>
<evidence type="ECO:0000255" key="2"/>
<evidence type="ECO:0000256" key="3">
    <source>
        <dbReference type="SAM" id="MobiDB-lite"/>
    </source>
</evidence>
<evidence type="ECO:0000305" key="4"/>
<protein>
    <recommendedName>
        <fullName>C-X-C motif chemokine 9</fullName>
    </recommendedName>
    <alternativeName>
        <fullName>Gamma-interferon-induced monokine</fullName>
    </alternativeName>
    <alternativeName>
        <fullName>Monokine induced by interferon-gamma</fullName>
        <shortName>MIG</shortName>
        <shortName>MuMIG</shortName>
    </alternativeName>
    <alternativeName>
        <fullName>Protein m119</fullName>
    </alternativeName>
    <alternativeName>
        <fullName>Small-inducible cytokine B9</fullName>
    </alternativeName>
</protein>
<proteinExistence type="evidence at transcript level"/>
<keyword id="KW-0202">Cytokine</keyword>
<keyword id="KW-1015">Disulfide bond</keyword>
<keyword id="KW-0325">Glycoprotein</keyword>
<keyword id="KW-0395">Inflammatory response</keyword>
<keyword id="KW-1185">Reference proteome</keyword>
<keyword id="KW-0964">Secreted</keyword>
<keyword id="KW-0732">Signal</keyword>
<feature type="signal peptide">
    <location>
        <begin position="1"/>
        <end position="21"/>
    </location>
</feature>
<feature type="chain" id="PRO_0000005100" description="C-X-C motif chemokine 9">
    <location>
        <begin position="22"/>
        <end position="126"/>
    </location>
</feature>
<feature type="region of interest" description="Disordered" evidence="3">
    <location>
        <begin position="91"/>
        <end position="126"/>
    </location>
</feature>
<feature type="compositionally biased region" description="Basic residues" evidence="3">
    <location>
        <begin position="93"/>
        <end position="126"/>
    </location>
</feature>
<feature type="glycosylation site" description="N-linked (GlcNAc...) asparagine" evidence="2">
    <location>
        <position position="58"/>
    </location>
</feature>
<feature type="disulfide bond" evidence="1">
    <location>
        <begin position="30"/>
        <end position="57"/>
    </location>
</feature>
<feature type="disulfide bond" evidence="1">
    <location>
        <begin position="32"/>
        <end position="73"/>
    </location>
</feature>
<feature type="sequence conflict" description="In Ref. 6; AAH03343." evidence="4" ref="6">
    <original>I</original>
    <variation>V</variation>
    <location>
        <position position="40"/>
    </location>
</feature>
<feature type="sequence conflict" description="In Ref. 1; AAA39706 and 6; AAH03343." evidence="4" ref="1 6">
    <original>S</original>
    <variation>N</variation>
    <location>
        <position position="93"/>
    </location>
</feature>
<gene>
    <name type="primary">Cxcl9</name>
    <name type="synonym">Mig</name>
    <name type="synonym">Scyb9</name>
</gene>
<accession>P18340</accession>
<accession>Q8C9J0</accession>
<accession>Q99J60</accession>
<sequence>MKSAVLFLLGIIFLEQCGVRGTLVIRNARCSCISTSRGTIHYKSLKDLKQFAPSPNCNKTEIIATLKNGDQTCLDPDSANVKKLMKEWEKKISQKKKQKRGKKHQKNMKNRKPKTPQSRRRSRKTT</sequence>
<dbReference type="EMBL" id="M34815">
    <property type="protein sequence ID" value="AAA39706.1"/>
    <property type="molecule type" value="mRNA"/>
</dbReference>
<dbReference type="EMBL" id="AK042017">
    <property type="protein sequence ID" value="BAC31132.1"/>
    <property type="molecule type" value="mRNA"/>
</dbReference>
<dbReference type="EMBL" id="AK156012">
    <property type="protein sequence ID" value="BAE33544.1"/>
    <property type="molecule type" value="mRNA"/>
</dbReference>
<dbReference type="EMBL" id="AK156029">
    <property type="protein sequence ID" value="BAE33552.1"/>
    <property type="molecule type" value="mRNA"/>
</dbReference>
<dbReference type="EMBL" id="AK156453">
    <property type="protein sequence ID" value="BAE33718.1"/>
    <property type="molecule type" value="mRNA"/>
</dbReference>
<dbReference type="EMBL" id="AK157118">
    <property type="protein sequence ID" value="BAE33967.1"/>
    <property type="molecule type" value="mRNA"/>
</dbReference>
<dbReference type="EMBL" id="CT010194">
    <property type="protein sequence ID" value="CAJ18402.1"/>
    <property type="molecule type" value="mRNA"/>
</dbReference>
<dbReference type="EMBL" id="AC122365">
    <property type="status" value="NOT_ANNOTATED_CDS"/>
    <property type="molecule type" value="Genomic_DNA"/>
</dbReference>
<dbReference type="EMBL" id="CH466617">
    <property type="protein sequence ID" value="EDL05257.1"/>
    <property type="molecule type" value="Genomic_DNA"/>
</dbReference>
<dbReference type="EMBL" id="BC003343">
    <property type="protein sequence ID" value="AAH03343.1"/>
    <property type="molecule type" value="mRNA"/>
</dbReference>
<dbReference type="CCDS" id="CCDS39152.1"/>
<dbReference type="PIR" id="A35766">
    <property type="entry name" value="A35766"/>
</dbReference>
<dbReference type="RefSeq" id="NP_032625.2">
    <property type="nucleotide sequence ID" value="NM_008599.4"/>
</dbReference>
<dbReference type="SMR" id="P18340"/>
<dbReference type="FunCoup" id="P18340">
    <property type="interactions" value="581"/>
</dbReference>
<dbReference type="STRING" id="10090.ENSMUSP00000108716"/>
<dbReference type="GlyCosmos" id="P18340">
    <property type="glycosylation" value="1 site, No reported glycans"/>
</dbReference>
<dbReference type="GlyGen" id="P18340">
    <property type="glycosylation" value="1 site"/>
</dbReference>
<dbReference type="iPTMnet" id="P18340"/>
<dbReference type="PhosphoSitePlus" id="P18340"/>
<dbReference type="PaxDb" id="10090-ENSMUSP00000108716"/>
<dbReference type="ProteomicsDB" id="283987"/>
<dbReference type="Antibodypedia" id="24750">
    <property type="antibodies" value="654 antibodies from 37 providers"/>
</dbReference>
<dbReference type="DNASU" id="17329"/>
<dbReference type="Ensembl" id="ENSMUST00000113093.5">
    <property type="protein sequence ID" value="ENSMUSP00000108716.4"/>
    <property type="gene ID" value="ENSMUSG00000029417.10"/>
</dbReference>
<dbReference type="GeneID" id="17329"/>
<dbReference type="KEGG" id="mmu:17329"/>
<dbReference type="UCSC" id="uc008ycv.2">
    <property type="organism name" value="mouse"/>
</dbReference>
<dbReference type="AGR" id="MGI:1352449"/>
<dbReference type="CTD" id="4283"/>
<dbReference type="MGI" id="MGI:1352449">
    <property type="gene designation" value="Cxcl9"/>
</dbReference>
<dbReference type="VEuPathDB" id="HostDB:ENSMUSG00000029417"/>
<dbReference type="eggNOG" id="ENOG502TDRN">
    <property type="taxonomic scope" value="Eukaryota"/>
</dbReference>
<dbReference type="GeneTree" id="ENSGT00940000161751"/>
<dbReference type="HOGENOM" id="CLU_143902_2_2_1"/>
<dbReference type="InParanoid" id="P18340"/>
<dbReference type="OMA" id="GKKYQKN"/>
<dbReference type="OrthoDB" id="9948647at2759"/>
<dbReference type="PhylomeDB" id="P18340"/>
<dbReference type="TreeFam" id="TF333433"/>
<dbReference type="Reactome" id="R-MMU-380108">
    <property type="pathway name" value="Chemokine receptors bind chemokines"/>
</dbReference>
<dbReference type="Reactome" id="R-MMU-418594">
    <property type="pathway name" value="G alpha (i) signalling events"/>
</dbReference>
<dbReference type="BioGRID-ORCS" id="17329">
    <property type="hits" value="1 hit in 79 CRISPR screens"/>
</dbReference>
<dbReference type="ChiTaRS" id="Cxcl9">
    <property type="organism name" value="mouse"/>
</dbReference>
<dbReference type="PRO" id="PR:P18340"/>
<dbReference type="Proteomes" id="UP000000589">
    <property type="component" value="Chromosome 5"/>
</dbReference>
<dbReference type="RNAct" id="P18340">
    <property type="molecule type" value="protein"/>
</dbReference>
<dbReference type="Bgee" id="ENSMUSG00000029417">
    <property type="expression patterns" value="Expressed in subcutaneous adipose tissue and 73 other cell types or tissues"/>
</dbReference>
<dbReference type="GO" id="GO:0009897">
    <property type="term" value="C:external side of plasma membrane"/>
    <property type="evidence" value="ECO:0000314"/>
    <property type="project" value="MGI"/>
</dbReference>
<dbReference type="GO" id="GO:0005615">
    <property type="term" value="C:extracellular space"/>
    <property type="evidence" value="ECO:0000314"/>
    <property type="project" value="MGI"/>
</dbReference>
<dbReference type="GO" id="GO:0008009">
    <property type="term" value="F:chemokine activity"/>
    <property type="evidence" value="ECO:0000250"/>
    <property type="project" value="UniProtKB"/>
</dbReference>
<dbReference type="GO" id="GO:0048248">
    <property type="term" value="F:CXCR3 chemokine receptor binding"/>
    <property type="evidence" value="ECO:0000250"/>
    <property type="project" value="UniProtKB"/>
</dbReference>
<dbReference type="GO" id="GO:0007189">
    <property type="term" value="P:adenylate cyclase-activating G protein-coupled receptor signaling pathway"/>
    <property type="evidence" value="ECO:0000250"/>
    <property type="project" value="UniProtKB"/>
</dbReference>
<dbReference type="GO" id="GO:0006935">
    <property type="term" value="P:chemotaxis"/>
    <property type="evidence" value="ECO:0000250"/>
    <property type="project" value="UniProtKB"/>
</dbReference>
<dbReference type="GO" id="GO:0051607">
    <property type="term" value="P:defense response to virus"/>
    <property type="evidence" value="ECO:0000314"/>
    <property type="project" value="MGI"/>
</dbReference>
<dbReference type="GO" id="GO:0006955">
    <property type="term" value="P:immune response"/>
    <property type="evidence" value="ECO:0007669"/>
    <property type="project" value="InterPro"/>
</dbReference>
<dbReference type="GO" id="GO:0006954">
    <property type="term" value="P:inflammatory response"/>
    <property type="evidence" value="ECO:0007669"/>
    <property type="project" value="UniProtKB-KW"/>
</dbReference>
<dbReference type="GO" id="GO:0045663">
    <property type="term" value="P:positive regulation of myoblast differentiation"/>
    <property type="evidence" value="ECO:0000315"/>
    <property type="project" value="MGI"/>
</dbReference>
<dbReference type="GO" id="GO:1901741">
    <property type="term" value="P:positive regulation of myoblast fusion"/>
    <property type="evidence" value="ECO:0000315"/>
    <property type="project" value="MGI"/>
</dbReference>
<dbReference type="GO" id="GO:0051281">
    <property type="term" value="P:positive regulation of release of sequestered calcium ion into cytosol"/>
    <property type="evidence" value="ECO:0000250"/>
    <property type="project" value="UniProtKB"/>
</dbReference>
<dbReference type="GO" id="GO:0042127">
    <property type="term" value="P:regulation of cell population proliferation"/>
    <property type="evidence" value="ECO:0000250"/>
    <property type="project" value="UniProtKB"/>
</dbReference>
<dbReference type="GO" id="GO:0009617">
    <property type="term" value="P:response to bacterium"/>
    <property type="evidence" value="ECO:0000270"/>
    <property type="project" value="MGI"/>
</dbReference>
<dbReference type="CDD" id="cd00273">
    <property type="entry name" value="Chemokine_CXC"/>
    <property type="match status" value="1"/>
</dbReference>
<dbReference type="FunFam" id="2.40.50.40:FF:000004">
    <property type="entry name" value="C-X-C motif chemokine"/>
    <property type="match status" value="1"/>
</dbReference>
<dbReference type="Gene3D" id="2.40.50.40">
    <property type="match status" value="1"/>
</dbReference>
<dbReference type="InterPro" id="IPR039809">
    <property type="entry name" value="Chemokine_b/g/d"/>
</dbReference>
<dbReference type="InterPro" id="IPR001089">
    <property type="entry name" value="Chemokine_CXC"/>
</dbReference>
<dbReference type="InterPro" id="IPR018048">
    <property type="entry name" value="Chemokine_CXC_CS"/>
</dbReference>
<dbReference type="InterPro" id="IPR001811">
    <property type="entry name" value="Chemokine_IL8-like_dom"/>
</dbReference>
<dbReference type="InterPro" id="IPR033899">
    <property type="entry name" value="CXC_Chemokine_domain"/>
</dbReference>
<dbReference type="InterPro" id="IPR036048">
    <property type="entry name" value="Interleukin_8-like_sf"/>
</dbReference>
<dbReference type="PANTHER" id="PTHR12015:SF210">
    <property type="entry name" value="C-X-C MOTIF CHEMOKINE 9"/>
    <property type="match status" value="1"/>
</dbReference>
<dbReference type="PANTHER" id="PTHR12015">
    <property type="entry name" value="SMALL INDUCIBLE CYTOKINE A"/>
    <property type="match status" value="1"/>
</dbReference>
<dbReference type="Pfam" id="PF00048">
    <property type="entry name" value="IL8"/>
    <property type="match status" value="1"/>
</dbReference>
<dbReference type="PRINTS" id="PR00437">
    <property type="entry name" value="SMALLCYTKCXC"/>
</dbReference>
<dbReference type="SMART" id="SM00199">
    <property type="entry name" value="SCY"/>
    <property type="match status" value="1"/>
</dbReference>
<dbReference type="SUPFAM" id="SSF54117">
    <property type="entry name" value="Interleukin 8-like chemokines"/>
    <property type="match status" value="1"/>
</dbReference>
<dbReference type="PROSITE" id="PS00471">
    <property type="entry name" value="SMALL_CYTOKINES_CXC"/>
    <property type="match status" value="1"/>
</dbReference>
<reference key="1">
    <citation type="journal article" date="1990" name="Proc. Natl. Acad. Sci. U.S.A.">
        <title>A macrophage mRNA selectively induced by gamma-interferon encodes a member of the platelet factor 4 family of cytokines.</title>
        <authorList>
            <person name="Farber J.M."/>
        </authorList>
    </citation>
    <scope>NUCLEOTIDE SEQUENCE [MRNA]</scope>
</reference>
<reference key="2">
    <citation type="journal article" date="2005" name="Science">
        <title>The transcriptional landscape of the mammalian genome.</title>
        <authorList>
            <person name="Carninci P."/>
            <person name="Kasukawa T."/>
            <person name="Katayama S."/>
            <person name="Gough J."/>
            <person name="Frith M.C."/>
            <person name="Maeda N."/>
            <person name="Oyama R."/>
            <person name="Ravasi T."/>
            <person name="Lenhard B."/>
            <person name="Wells C."/>
            <person name="Kodzius R."/>
            <person name="Shimokawa K."/>
            <person name="Bajic V.B."/>
            <person name="Brenner S.E."/>
            <person name="Batalov S."/>
            <person name="Forrest A.R."/>
            <person name="Zavolan M."/>
            <person name="Davis M.J."/>
            <person name="Wilming L.G."/>
            <person name="Aidinis V."/>
            <person name="Allen J.E."/>
            <person name="Ambesi-Impiombato A."/>
            <person name="Apweiler R."/>
            <person name="Aturaliya R.N."/>
            <person name="Bailey T.L."/>
            <person name="Bansal M."/>
            <person name="Baxter L."/>
            <person name="Beisel K.W."/>
            <person name="Bersano T."/>
            <person name="Bono H."/>
            <person name="Chalk A.M."/>
            <person name="Chiu K.P."/>
            <person name="Choudhary V."/>
            <person name="Christoffels A."/>
            <person name="Clutterbuck D.R."/>
            <person name="Crowe M.L."/>
            <person name="Dalla E."/>
            <person name="Dalrymple B.P."/>
            <person name="de Bono B."/>
            <person name="Della Gatta G."/>
            <person name="di Bernardo D."/>
            <person name="Down T."/>
            <person name="Engstrom P."/>
            <person name="Fagiolini M."/>
            <person name="Faulkner G."/>
            <person name="Fletcher C.F."/>
            <person name="Fukushima T."/>
            <person name="Furuno M."/>
            <person name="Futaki S."/>
            <person name="Gariboldi M."/>
            <person name="Georgii-Hemming P."/>
            <person name="Gingeras T.R."/>
            <person name="Gojobori T."/>
            <person name="Green R.E."/>
            <person name="Gustincich S."/>
            <person name="Harbers M."/>
            <person name="Hayashi Y."/>
            <person name="Hensch T.K."/>
            <person name="Hirokawa N."/>
            <person name="Hill D."/>
            <person name="Huminiecki L."/>
            <person name="Iacono M."/>
            <person name="Ikeo K."/>
            <person name="Iwama A."/>
            <person name="Ishikawa T."/>
            <person name="Jakt M."/>
            <person name="Kanapin A."/>
            <person name="Katoh M."/>
            <person name="Kawasawa Y."/>
            <person name="Kelso J."/>
            <person name="Kitamura H."/>
            <person name="Kitano H."/>
            <person name="Kollias G."/>
            <person name="Krishnan S.P."/>
            <person name="Kruger A."/>
            <person name="Kummerfeld S.K."/>
            <person name="Kurochkin I.V."/>
            <person name="Lareau L.F."/>
            <person name="Lazarevic D."/>
            <person name="Lipovich L."/>
            <person name="Liu J."/>
            <person name="Liuni S."/>
            <person name="McWilliam S."/>
            <person name="Madan Babu M."/>
            <person name="Madera M."/>
            <person name="Marchionni L."/>
            <person name="Matsuda H."/>
            <person name="Matsuzawa S."/>
            <person name="Miki H."/>
            <person name="Mignone F."/>
            <person name="Miyake S."/>
            <person name="Morris K."/>
            <person name="Mottagui-Tabar S."/>
            <person name="Mulder N."/>
            <person name="Nakano N."/>
            <person name="Nakauchi H."/>
            <person name="Ng P."/>
            <person name="Nilsson R."/>
            <person name="Nishiguchi S."/>
            <person name="Nishikawa S."/>
            <person name="Nori F."/>
            <person name="Ohara O."/>
            <person name="Okazaki Y."/>
            <person name="Orlando V."/>
            <person name="Pang K.C."/>
            <person name="Pavan W.J."/>
            <person name="Pavesi G."/>
            <person name="Pesole G."/>
            <person name="Petrovsky N."/>
            <person name="Piazza S."/>
            <person name="Reed J."/>
            <person name="Reid J.F."/>
            <person name="Ring B.Z."/>
            <person name="Ringwald M."/>
            <person name="Rost B."/>
            <person name="Ruan Y."/>
            <person name="Salzberg S.L."/>
            <person name="Sandelin A."/>
            <person name="Schneider C."/>
            <person name="Schoenbach C."/>
            <person name="Sekiguchi K."/>
            <person name="Semple C.A."/>
            <person name="Seno S."/>
            <person name="Sessa L."/>
            <person name="Sheng Y."/>
            <person name="Shibata Y."/>
            <person name="Shimada H."/>
            <person name="Shimada K."/>
            <person name="Silva D."/>
            <person name="Sinclair B."/>
            <person name="Sperling S."/>
            <person name="Stupka E."/>
            <person name="Sugiura K."/>
            <person name="Sultana R."/>
            <person name="Takenaka Y."/>
            <person name="Taki K."/>
            <person name="Tammoja K."/>
            <person name="Tan S.L."/>
            <person name="Tang S."/>
            <person name="Taylor M.S."/>
            <person name="Tegner J."/>
            <person name="Teichmann S.A."/>
            <person name="Ueda H.R."/>
            <person name="van Nimwegen E."/>
            <person name="Verardo R."/>
            <person name="Wei C.L."/>
            <person name="Yagi K."/>
            <person name="Yamanishi H."/>
            <person name="Zabarovsky E."/>
            <person name="Zhu S."/>
            <person name="Zimmer A."/>
            <person name="Hide W."/>
            <person name="Bult C."/>
            <person name="Grimmond S.M."/>
            <person name="Teasdale R.D."/>
            <person name="Liu E.T."/>
            <person name="Brusic V."/>
            <person name="Quackenbush J."/>
            <person name="Wahlestedt C."/>
            <person name="Mattick J.S."/>
            <person name="Hume D.A."/>
            <person name="Kai C."/>
            <person name="Sasaki D."/>
            <person name="Tomaru Y."/>
            <person name="Fukuda S."/>
            <person name="Kanamori-Katayama M."/>
            <person name="Suzuki M."/>
            <person name="Aoki J."/>
            <person name="Arakawa T."/>
            <person name="Iida J."/>
            <person name="Imamura K."/>
            <person name="Itoh M."/>
            <person name="Kato T."/>
            <person name="Kawaji H."/>
            <person name="Kawagashira N."/>
            <person name="Kawashima T."/>
            <person name="Kojima M."/>
            <person name="Kondo S."/>
            <person name="Konno H."/>
            <person name="Nakano K."/>
            <person name="Ninomiya N."/>
            <person name="Nishio T."/>
            <person name="Okada M."/>
            <person name="Plessy C."/>
            <person name="Shibata K."/>
            <person name="Shiraki T."/>
            <person name="Suzuki S."/>
            <person name="Tagami M."/>
            <person name="Waki K."/>
            <person name="Watahiki A."/>
            <person name="Okamura-Oho Y."/>
            <person name="Suzuki H."/>
            <person name="Kawai J."/>
            <person name="Hayashizaki Y."/>
        </authorList>
    </citation>
    <scope>NUCLEOTIDE SEQUENCE [LARGE SCALE MRNA]</scope>
    <source>
        <strain>C57BL/6J</strain>
        <strain>NOD</strain>
        <tissue>Spleen</tissue>
        <tissue>Thymus</tissue>
    </source>
</reference>
<reference key="3">
    <citation type="submission" date="2005-07" db="EMBL/GenBank/DDBJ databases">
        <title>Cloning of mouse full open reading frames in Gateway(R) system entry vector (pDONR201).</title>
        <authorList>
            <person name="Ebert L."/>
            <person name="Muenstermann E."/>
            <person name="Schatten R."/>
            <person name="Henze S."/>
            <person name="Bohn E."/>
            <person name="Mollenhauer J."/>
            <person name="Wiemann S."/>
            <person name="Schick M."/>
            <person name="Korn B."/>
        </authorList>
    </citation>
    <scope>NUCLEOTIDE SEQUENCE [LARGE SCALE MRNA]</scope>
</reference>
<reference key="4">
    <citation type="journal article" date="2009" name="PLoS Biol.">
        <title>Lineage-specific biology revealed by a finished genome assembly of the mouse.</title>
        <authorList>
            <person name="Church D.M."/>
            <person name="Goodstadt L."/>
            <person name="Hillier L.W."/>
            <person name="Zody M.C."/>
            <person name="Goldstein S."/>
            <person name="She X."/>
            <person name="Bult C.J."/>
            <person name="Agarwala R."/>
            <person name="Cherry J.L."/>
            <person name="DiCuccio M."/>
            <person name="Hlavina W."/>
            <person name="Kapustin Y."/>
            <person name="Meric P."/>
            <person name="Maglott D."/>
            <person name="Birtle Z."/>
            <person name="Marques A.C."/>
            <person name="Graves T."/>
            <person name="Zhou S."/>
            <person name="Teague B."/>
            <person name="Potamousis K."/>
            <person name="Churas C."/>
            <person name="Place M."/>
            <person name="Herschleb J."/>
            <person name="Runnheim R."/>
            <person name="Forrest D."/>
            <person name="Amos-Landgraf J."/>
            <person name="Schwartz D.C."/>
            <person name="Cheng Z."/>
            <person name="Lindblad-Toh K."/>
            <person name="Eichler E.E."/>
            <person name="Ponting C.P."/>
        </authorList>
    </citation>
    <scope>NUCLEOTIDE SEQUENCE [LARGE SCALE GENOMIC DNA]</scope>
    <source>
        <strain>C57BL/6J</strain>
    </source>
</reference>
<reference key="5">
    <citation type="submission" date="2005-07" db="EMBL/GenBank/DDBJ databases">
        <authorList>
            <person name="Mural R.J."/>
            <person name="Adams M.D."/>
            <person name="Myers E.W."/>
            <person name="Smith H.O."/>
            <person name="Venter J.C."/>
        </authorList>
    </citation>
    <scope>NUCLEOTIDE SEQUENCE [LARGE SCALE GENOMIC DNA]</scope>
</reference>
<reference key="6">
    <citation type="journal article" date="2004" name="Genome Res.">
        <title>The status, quality, and expansion of the NIH full-length cDNA project: the Mammalian Gene Collection (MGC).</title>
        <authorList>
            <consortium name="The MGC Project Team"/>
        </authorList>
    </citation>
    <scope>NUCLEOTIDE SEQUENCE [LARGE SCALE MRNA]</scope>
    <source>
        <tissue>Mammary tumor</tissue>
    </source>
</reference>
<organism>
    <name type="scientific">Mus musculus</name>
    <name type="common">Mouse</name>
    <dbReference type="NCBI Taxonomy" id="10090"/>
    <lineage>
        <taxon>Eukaryota</taxon>
        <taxon>Metazoa</taxon>
        <taxon>Chordata</taxon>
        <taxon>Craniata</taxon>
        <taxon>Vertebrata</taxon>
        <taxon>Euteleostomi</taxon>
        <taxon>Mammalia</taxon>
        <taxon>Eutheria</taxon>
        <taxon>Euarchontoglires</taxon>
        <taxon>Glires</taxon>
        <taxon>Rodentia</taxon>
        <taxon>Myomorpha</taxon>
        <taxon>Muroidea</taxon>
        <taxon>Muridae</taxon>
        <taxon>Murinae</taxon>
        <taxon>Mus</taxon>
        <taxon>Mus</taxon>
    </lineage>
</organism>
<name>CXCL9_MOUSE</name>